<organism>
    <name type="scientific">Pseudomonas fluorescens</name>
    <dbReference type="NCBI Taxonomy" id="294"/>
    <lineage>
        <taxon>Bacteria</taxon>
        <taxon>Pseudomonadati</taxon>
        <taxon>Pseudomonadota</taxon>
        <taxon>Gammaproteobacteria</taxon>
        <taxon>Pseudomonadales</taxon>
        <taxon>Pseudomonadaceae</taxon>
        <taxon>Pseudomonas</taxon>
    </lineage>
</organism>
<name>STYD_PSEFL</name>
<sequence length="502" mass="53497">MTRSLTMNSSLPAIDGLRLPHQMLIGGQWVNAQSDKTLNVYNPATGDTLTDVPDGDVEDVNAAVESAAATLQSDAWRRMPPSARERILLRLADLLEAHGDELARLETLNNGKLLIYSKMMEVGASAQWLRYMAGWATKLTGSTLDLSLPLPPDVRSRASTQRVPVGVVAAIIPWNFPLLMAVWKIAPALACGNTVVLKPAEETPLTALRLAELAMEAGLPAGALNVVTGRGETAGDALVRHPKVAKVAFTGSTEVGRIIGSACGRSLKAVSLELGGKSPVIVLADCDPQEAAEGAAAAIFFNHGQVCTAGSRLYVHESIYEDVIQRLAVIGESIVVGSGLEQGVHMGPMVSKKHHENVLRHIRNGIEDGADLICGGTEAPCAQGFFVKPTIFANREKKDIRLLSQEVFGPVLVATPFSDIAEVVNEANRSVYGLGASIWTNDLSAALRINDELEAGTVWVNTHNMVDPNLPFGGFKDSGVGREHGAAAIEHYTTTRSLVIAY</sequence>
<reference key="1">
    <citation type="journal article" date="1997" name="Appl. Environ. Microbiol.">
        <title>Sequencing and functional analysis of styrene catabolism genes from Pseudomonas fluorescens ST.</title>
        <authorList>
            <person name="Beltrametti F."/>
            <person name="Marconi A.M."/>
            <person name="Bestetti G."/>
            <person name="Colombo C."/>
            <person name="Galli E."/>
            <person name="Ruzzi M."/>
            <person name="Zennaro E."/>
        </authorList>
    </citation>
    <scope>NUCLEOTIDE SEQUENCE [GENOMIC DNA]</scope>
    <scope>FUNCTION</scope>
    <scope>CATALYTIC ACTIVITY</scope>
    <scope>PATHWAY</scope>
    <source>
        <strain>ST</strain>
    </source>
</reference>
<proteinExistence type="evidence at protein level"/>
<gene>
    <name type="primary">styD</name>
</gene>
<dbReference type="EC" id="1.2.1.39"/>
<dbReference type="EMBL" id="Z92524">
    <property type="protein sequence ID" value="CAB06826.1"/>
    <property type="molecule type" value="Genomic_DNA"/>
</dbReference>
<dbReference type="SMR" id="O06837"/>
<dbReference type="BioCyc" id="MetaCyc:MONOMER-16949"/>
<dbReference type="GO" id="GO:0008957">
    <property type="term" value="F:phenylacetaldehyde dehydrogenase (NAD+) activity"/>
    <property type="evidence" value="ECO:0000314"/>
    <property type="project" value="UniProtKB"/>
</dbReference>
<dbReference type="GO" id="GO:0042207">
    <property type="term" value="P:styrene catabolic process"/>
    <property type="evidence" value="ECO:0000314"/>
    <property type="project" value="UniProtKB"/>
</dbReference>
<dbReference type="FunFam" id="3.40.309.10:FF:000012">
    <property type="entry name" value="Betaine aldehyde dehydrogenase"/>
    <property type="match status" value="1"/>
</dbReference>
<dbReference type="FunFam" id="3.40.605.10:FF:000007">
    <property type="entry name" value="NAD/NADP-dependent betaine aldehyde dehydrogenase"/>
    <property type="match status" value="1"/>
</dbReference>
<dbReference type="Gene3D" id="3.40.605.10">
    <property type="entry name" value="Aldehyde Dehydrogenase, Chain A, domain 1"/>
    <property type="match status" value="1"/>
</dbReference>
<dbReference type="Gene3D" id="3.40.309.10">
    <property type="entry name" value="Aldehyde Dehydrogenase, Chain A, domain 2"/>
    <property type="match status" value="1"/>
</dbReference>
<dbReference type="InterPro" id="IPR016161">
    <property type="entry name" value="Ald_DH/histidinol_DH"/>
</dbReference>
<dbReference type="InterPro" id="IPR016163">
    <property type="entry name" value="Ald_DH_C"/>
</dbReference>
<dbReference type="InterPro" id="IPR016160">
    <property type="entry name" value="Ald_DH_CS_CYS"/>
</dbReference>
<dbReference type="InterPro" id="IPR029510">
    <property type="entry name" value="Ald_DH_CS_GLU"/>
</dbReference>
<dbReference type="InterPro" id="IPR016162">
    <property type="entry name" value="Ald_DH_N"/>
</dbReference>
<dbReference type="InterPro" id="IPR015590">
    <property type="entry name" value="Aldehyde_DH_dom"/>
</dbReference>
<dbReference type="InterPro" id="IPR054805">
    <property type="entry name" value="StyD"/>
</dbReference>
<dbReference type="NCBIfam" id="NF045735">
    <property type="entry name" value="PaDhStyDPseudo"/>
    <property type="match status" value="1"/>
</dbReference>
<dbReference type="PANTHER" id="PTHR11699">
    <property type="entry name" value="ALDEHYDE DEHYDROGENASE-RELATED"/>
    <property type="match status" value="1"/>
</dbReference>
<dbReference type="Pfam" id="PF00171">
    <property type="entry name" value="Aldedh"/>
    <property type="match status" value="1"/>
</dbReference>
<dbReference type="SUPFAM" id="SSF53720">
    <property type="entry name" value="ALDH-like"/>
    <property type="match status" value="1"/>
</dbReference>
<dbReference type="PROSITE" id="PS00070">
    <property type="entry name" value="ALDEHYDE_DEHYDR_CYS"/>
    <property type="match status" value="1"/>
</dbReference>
<dbReference type="PROSITE" id="PS00687">
    <property type="entry name" value="ALDEHYDE_DEHYDR_GLU"/>
    <property type="match status" value="1"/>
</dbReference>
<accession>O06837</accession>
<feature type="chain" id="PRO_0000430452" description="Phenylacetaldehyde dehydrogenase">
    <location>
        <begin position="1"/>
        <end position="502"/>
    </location>
</feature>
<feature type="active site" evidence="1">
    <location>
        <position position="273"/>
    </location>
</feature>
<feature type="active site" evidence="1">
    <location>
        <position position="307"/>
    </location>
</feature>
<feature type="binding site" evidence="1">
    <location>
        <begin position="251"/>
        <end position="256"/>
    </location>
    <ligand>
        <name>NAD(+)</name>
        <dbReference type="ChEBI" id="CHEBI:57540"/>
    </ligand>
</feature>
<comment type="function">
    <text evidence="2">Phenylacetaldehyde dehydrogenase that catalyzes the last step in the aerobic styrene degradation pathway by mediating oxidation of phenylacetaldehyde to phenylacetic acid.</text>
</comment>
<comment type="catalytic activity">
    <reaction evidence="2">
        <text>2-phenylacetaldehyde + NAD(+) + H2O = 2-phenylacetate + NADH + 2 H(+)</text>
        <dbReference type="Rhea" id="RHEA:21392"/>
        <dbReference type="ChEBI" id="CHEBI:15377"/>
        <dbReference type="ChEBI" id="CHEBI:15378"/>
        <dbReference type="ChEBI" id="CHEBI:16424"/>
        <dbReference type="ChEBI" id="CHEBI:18401"/>
        <dbReference type="ChEBI" id="CHEBI:57540"/>
        <dbReference type="ChEBI" id="CHEBI:57945"/>
        <dbReference type="EC" id="1.2.1.39"/>
    </reaction>
</comment>
<comment type="pathway">
    <text evidence="2">Aromatic compound metabolism.</text>
</comment>
<comment type="similarity">
    <text evidence="3">Belongs to the aldehyde dehydrogenase family.</text>
</comment>
<evidence type="ECO:0000250" key="1"/>
<evidence type="ECO:0000269" key="2">
    <source>
    </source>
</evidence>
<evidence type="ECO:0000305" key="3"/>
<keyword id="KW-0520">NAD</keyword>
<keyword id="KW-0560">Oxidoreductase</keyword>
<protein>
    <recommendedName>
        <fullName>Phenylacetaldehyde dehydrogenase</fullName>
        <shortName>PAD</shortName>
        <ecNumber>1.2.1.39</ecNumber>
    </recommendedName>
</protein>